<sequence>MRRSGSKESTIVYSALSLAQAGRGPEALALLEPLKSTPINSLELLDIIQAVYDDQKKGEESFVFWEKFLQTYGKQEKNLLAYFKASIRIKSLSHQRKAAVELQKNFPSRKHTLWVISSLYLLSKKSENEVEQRLLKALAEKTAKLIFEKPTGYIDSCEEFHLYLDVLLLVGDKDRALDALIHQDADRFVDADADLLLRKLELLASCARWDSLFTFSLSLFQTGNTDWKVCKALLDSASNDDSKLVPLKDCILKALSTSSTKRNLHLLWIEASARFFPEEHESALLGYIKKLYMKPIVFEDLRPYLLKLNVDAQHRLLDAFKLADLGESNESQKVDKLYAEVLLLKIHFLLFESFTAESVVDYVRRCFVAFEKGLSLSKGLLPTDFTHGYEALLLAVHSLIYMWEGNKDLKPAEKQALIFDAICLLEKGITYSQHNFHLKLPLIRLYLLLDGGFPAAAKVYDTMSIKQIQNDTLDHYLLTRATTYYPSSVTSHYINSSLKIYGSNEFETPEMISMAYEDGAYSQIEDMRNFRSRLDHSTWKSISLVERARIHYLTAFKPPKQYLPKCSSPKDNRDLKVFADYGSDKLPTVEESLRNSPKPDTLWIHLTVIGHSLVQDSIVNGDFEKAVLSAKEMEVLCENNDLSKQLTSEEIVHMKLLIQLGLLSVKVKNGDYENSSFETIENLIESFDYENSTPLSQLTKYTEIINDLITCLNSFLYHVSATKKKEFTRQYQLLKNISSNKLGSISGITKHKKKAARKYVSELLSNSWLSNLSETQVPYDPKFAKQVGEGMIDSYIQTTDAVSKLPKFVKF</sequence>
<evidence type="ECO:0000250" key="1"/>
<evidence type="ECO:0000269" key="2">
    <source>
    </source>
</evidence>
<evidence type="ECO:0000305" key="3"/>
<proteinExistence type="inferred from homology"/>
<reference key="1">
    <citation type="journal article" date="2002" name="Nature">
        <title>The genome sequence of Schizosaccharomyces pombe.</title>
        <authorList>
            <person name="Wood V."/>
            <person name="Gwilliam R."/>
            <person name="Rajandream M.A."/>
            <person name="Lyne M.H."/>
            <person name="Lyne R."/>
            <person name="Stewart A."/>
            <person name="Sgouros J.G."/>
            <person name="Peat N."/>
            <person name="Hayles J."/>
            <person name="Baker S.G."/>
            <person name="Basham D."/>
            <person name="Bowman S."/>
            <person name="Brooks K."/>
            <person name="Brown D."/>
            <person name="Brown S."/>
            <person name="Chillingworth T."/>
            <person name="Churcher C.M."/>
            <person name="Collins M."/>
            <person name="Connor R."/>
            <person name="Cronin A."/>
            <person name="Davis P."/>
            <person name="Feltwell T."/>
            <person name="Fraser A."/>
            <person name="Gentles S."/>
            <person name="Goble A."/>
            <person name="Hamlin N."/>
            <person name="Harris D.E."/>
            <person name="Hidalgo J."/>
            <person name="Hodgson G."/>
            <person name="Holroyd S."/>
            <person name="Hornsby T."/>
            <person name="Howarth S."/>
            <person name="Huckle E.J."/>
            <person name="Hunt S."/>
            <person name="Jagels K."/>
            <person name="James K.D."/>
            <person name="Jones L."/>
            <person name="Jones M."/>
            <person name="Leather S."/>
            <person name="McDonald S."/>
            <person name="McLean J."/>
            <person name="Mooney P."/>
            <person name="Moule S."/>
            <person name="Mungall K.L."/>
            <person name="Murphy L.D."/>
            <person name="Niblett D."/>
            <person name="Odell C."/>
            <person name="Oliver K."/>
            <person name="O'Neil S."/>
            <person name="Pearson D."/>
            <person name="Quail M.A."/>
            <person name="Rabbinowitsch E."/>
            <person name="Rutherford K.M."/>
            <person name="Rutter S."/>
            <person name="Saunders D."/>
            <person name="Seeger K."/>
            <person name="Sharp S."/>
            <person name="Skelton J."/>
            <person name="Simmonds M.N."/>
            <person name="Squares R."/>
            <person name="Squares S."/>
            <person name="Stevens K."/>
            <person name="Taylor K."/>
            <person name="Taylor R.G."/>
            <person name="Tivey A."/>
            <person name="Walsh S.V."/>
            <person name="Warren T."/>
            <person name="Whitehead S."/>
            <person name="Woodward J.R."/>
            <person name="Volckaert G."/>
            <person name="Aert R."/>
            <person name="Robben J."/>
            <person name="Grymonprez B."/>
            <person name="Weltjens I."/>
            <person name="Vanstreels E."/>
            <person name="Rieger M."/>
            <person name="Schaefer M."/>
            <person name="Mueller-Auer S."/>
            <person name="Gabel C."/>
            <person name="Fuchs M."/>
            <person name="Duesterhoeft A."/>
            <person name="Fritzc C."/>
            <person name="Holzer E."/>
            <person name="Moestl D."/>
            <person name="Hilbert H."/>
            <person name="Borzym K."/>
            <person name="Langer I."/>
            <person name="Beck A."/>
            <person name="Lehrach H."/>
            <person name="Reinhardt R."/>
            <person name="Pohl T.M."/>
            <person name="Eger P."/>
            <person name="Zimmermann W."/>
            <person name="Wedler H."/>
            <person name="Wambutt R."/>
            <person name="Purnelle B."/>
            <person name="Goffeau A."/>
            <person name="Cadieu E."/>
            <person name="Dreano S."/>
            <person name="Gloux S."/>
            <person name="Lelaure V."/>
            <person name="Mottier S."/>
            <person name="Galibert F."/>
            <person name="Aves S.J."/>
            <person name="Xiang Z."/>
            <person name="Hunt C."/>
            <person name="Moore K."/>
            <person name="Hurst S.M."/>
            <person name="Lucas M."/>
            <person name="Rochet M."/>
            <person name="Gaillardin C."/>
            <person name="Tallada V.A."/>
            <person name="Garzon A."/>
            <person name="Thode G."/>
            <person name="Daga R.R."/>
            <person name="Cruzado L."/>
            <person name="Jimenez J."/>
            <person name="Sanchez M."/>
            <person name="del Rey F."/>
            <person name="Benito J."/>
            <person name="Dominguez A."/>
            <person name="Revuelta J.L."/>
            <person name="Moreno S."/>
            <person name="Armstrong J."/>
            <person name="Forsburg S.L."/>
            <person name="Cerutti L."/>
            <person name="Lowe T."/>
            <person name="McCombie W.R."/>
            <person name="Paulsen I."/>
            <person name="Potashkin J."/>
            <person name="Shpakovski G.V."/>
            <person name="Ussery D."/>
            <person name="Barrell B.G."/>
            <person name="Nurse P."/>
        </authorList>
    </citation>
    <scope>NUCLEOTIDE SEQUENCE [LARGE SCALE GENOMIC DNA]</scope>
    <source>
        <strain>972 / ATCC 24843</strain>
    </source>
</reference>
<reference key="2">
    <citation type="journal article" date="2006" name="Nat. Biotechnol.">
        <title>ORFeome cloning and global analysis of protein localization in the fission yeast Schizosaccharomyces pombe.</title>
        <authorList>
            <person name="Matsuyama A."/>
            <person name="Arai R."/>
            <person name="Yashiroda Y."/>
            <person name="Shirai A."/>
            <person name="Kamata A."/>
            <person name="Sekido S."/>
            <person name="Kobayashi Y."/>
            <person name="Hashimoto A."/>
            <person name="Hamamoto M."/>
            <person name="Hiraoka Y."/>
            <person name="Horinouchi S."/>
            <person name="Yoshida M."/>
        </authorList>
    </citation>
    <scope>SUBCELLULAR LOCATION [LARGE SCALE ANALYSIS]</scope>
</reference>
<feature type="chain" id="PRO_0000353830" description="N-terminal acetyltransferase B complex subunit arm1">
    <location>
        <begin position="1"/>
        <end position="811"/>
    </location>
</feature>
<protein>
    <recommendedName>
        <fullName>N-terminal acetyltransferase B complex subunit arm1</fullName>
        <shortName>NatB complex subunit arm1</shortName>
    </recommendedName>
    <alternativeName>
        <fullName>Mitochondrial distribution and morphology protein 20</fullName>
    </alternativeName>
</protein>
<name>NAA25_SCHPO</name>
<organism>
    <name type="scientific">Schizosaccharomyces pombe (strain 972 / ATCC 24843)</name>
    <name type="common">Fission yeast</name>
    <dbReference type="NCBI Taxonomy" id="284812"/>
    <lineage>
        <taxon>Eukaryota</taxon>
        <taxon>Fungi</taxon>
        <taxon>Dikarya</taxon>
        <taxon>Ascomycota</taxon>
        <taxon>Taphrinomycotina</taxon>
        <taxon>Schizosaccharomycetes</taxon>
        <taxon>Schizosaccharomycetales</taxon>
        <taxon>Schizosaccharomycetaceae</taxon>
        <taxon>Schizosaccharomyces</taxon>
    </lineage>
</organism>
<keyword id="KW-0963">Cytoplasm</keyword>
<keyword id="KW-1185">Reference proteome</keyword>
<accession>Q9Y809</accession>
<dbReference type="EMBL" id="CU329671">
    <property type="protein sequence ID" value="CAB50923.1"/>
    <property type="molecule type" value="Genomic_DNA"/>
</dbReference>
<dbReference type="PIR" id="T39336">
    <property type="entry name" value="T39336"/>
</dbReference>
<dbReference type="RefSeq" id="NP_595632.1">
    <property type="nucleotide sequence ID" value="NM_001021526.2"/>
</dbReference>
<dbReference type="SMR" id="Q9Y809"/>
<dbReference type="BioGRID" id="276620">
    <property type="interactions" value="1"/>
</dbReference>
<dbReference type="FunCoup" id="Q9Y809">
    <property type="interactions" value="706"/>
</dbReference>
<dbReference type="STRING" id="284812.Q9Y809"/>
<dbReference type="iPTMnet" id="Q9Y809"/>
<dbReference type="PaxDb" id="4896-SPBC1215.02c.1"/>
<dbReference type="EnsemblFungi" id="SPBC1215.02c.1">
    <property type="protein sequence ID" value="SPBC1215.02c.1:pep"/>
    <property type="gene ID" value="SPBC1215.02c"/>
</dbReference>
<dbReference type="GeneID" id="2540082"/>
<dbReference type="KEGG" id="spo:2540082"/>
<dbReference type="PomBase" id="SPBC1215.02c"/>
<dbReference type="VEuPathDB" id="FungiDB:SPBC1215.02c"/>
<dbReference type="eggNOG" id="KOG2053">
    <property type="taxonomic scope" value="Eukaryota"/>
</dbReference>
<dbReference type="HOGENOM" id="CLU_347869_0_0_1"/>
<dbReference type="InParanoid" id="Q9Y809"/>
<dbReference type="OMA" id="WKRREHQ"/>
<dbReference type="PhylomeDB" id="Q9Y809"/>
<dbReference type="PRO" id="PR:Q9Y809"/>
<dbReference type="Proteomes" id="UP000002485">
    <property type="component" value="Chromosome II"/>
</dbReference>
<dbReference type="GO" id="GO:0005737">
    <property type="term" value="C:cytoplasm"/>
    <property type="evidence" value="ECO:0000318"/>
    <property type="project" value="GO_Central"/>
</dbReference>
<dbReference type="GO" id="GO:0005829">
    <property type="term" value="C:cytosol"/>
    <property type="evidence" value="ECO:0007005"/>
    <property type="project" value="PomBase"/>
</dbReference>
<dbReference type="GO" id="GO:0031416">
    <property type="term" value="C:NatB complex"/>
    <property type="evidence" value="ECO:0000318"/>
    <property type="project" value="GO_Central"/>
</dbReference>
<dbReference type="GO" id="GO:0010698">
    <property type="term" value="F:acetyltransferase activator activity"/>
    <property type="evidence" value="ECO:0000318"/>
    <property type="project" value="GO_Central"/>
</dbReference>
<dbReference type="GO" id="GO:0003779">
    <property type="term" value="F:actin binding"/>
    <property type="evidence" value="ECO:0000250"/>
    <property type="project" value="PomBase"/>
</dbReference>
<dbReference type="GO" id="GO:0007010">
    <property type="term" value="P:cytoskeleton organization"/>
    <property type="evidence" value="ECO:0000318"/>
    <property type="project" value="GO_Central"/>
</dbReference>
<dbReference type="GO" id="GO:1903475">
    <property type="term" value="P:mitotic actomyosin contractile ring assembly"/>
    <property type="evidence" value="ECO:0000315"/>
    <property type="project" value="PomBase"/>
</dbReference>
<dbReference type="GO" id="GO:0051604">
    <property type="term" value="P:protein maturation"/>
    <property type="evidence" value="ECO:0000303"/>
    <property type="project" value="PomBase"/>
</dbReference>
<dbReference type="InterPro" id="IPR019183">
    <property type="entry name" value="NAA25_NatB_aux_su"/>
</dbReference>
<dbReference type="PANTHER" id="PTHR22767:SF3">
    <property type="entry name" value="N-ALPHA-ACETYLTRANSFERASE 25, NATB AUXILIARY SUBUNIT"/>
    <property type="match status" value="1"/>
</dbReference>
<dbReference type="PANTHER" id="PTHR22767">
    <property type="entry name" value="N-TERMINAL ACETYLTRANSFERASE-RELATED"/>
    <property type="match status" value="1"/>
</dbReference>
<dbReference type="Pfam" id="PF09797">
    <property type="entry name" value="NatB_MDM20"/>
    <property type="match status" value="1"/>
</dbReference>
<comment type="function">
    <text evidence="1">Non-catalytic subunit of the NatB N-terminal acetyltransferase, which catalyzes acetylation of the amino-terminal methionine residues of all proteins beginning with Met-Asp or Met-Glu and of some proteins beginning with Met-Asn or Met-Met.</text>
</comment>
<comment type="subunit">
    <text evidence="1">Component of the N-terminal acetyltransferase B (NatB) complex.</text>
</comment>
<comment type="subcellular location">
    <subcellularLocation>
        <location evidence="2">Cytoplasm</location>
    </subcellularLocation>
</comment>
<comment type="similarity">
    <text evidence="3">Belongs to the MDM20/NAA25 family.</text>
</comment>
<gene>
    <name type="primary">arm1</name>
    <name type="synonym">mdm20</name>
    <name type="ORF">SPBC1215.02c</name>
</gene>